<organism>
    <name type="scientific">Dictyostelium discoideum</name>
    <name type="common">Social amoeba</name>
    <dbReference type="NCBI Taxonomy" id="44689"/>
    <lineage>
        <taxon>Eukaryota</taxon>
        <taxon>Amoebozoa</taxon>
        <taxon>Evosea</taxon>
        <taxon>Eumycetozoa</taxon>
        <taxon>Dictyostelia</taxon>
        <taxon>Dictyosteliales</taxon>
        <taxon>Dictyosteliaceae</taxon>
        <taxon>Dictyostelium</taxon>
    </lineage>
</organism>
<comment type="function">
    <text evidence="1">Regulatory subunit of the dimeric uba3-nae1 E1 enzyme. E1 activates nedd8 by first adenylating its C-terminal glycine residue with ATP, thereafter linking this residue to the side chain of the catalytic cysteine, yielding a nedd8-uba3 thioester and free AMP. E1 finally transfers nedd8 to the catalytic cysteine of ube2m (By similarity).</text>
</comment>
<comment type="catalytic activity">
    <reaction>
        <text>ATP + [NEDD8 protein] + [E1 NEDD8-activating enzyme]-L-cysteine = AMP + diphosphate + [E1 NEDD8-activating enzyme]-S-[NEDD8 protein]-yl-L-cysteine.</text>
        <dbReference type="EC" id="6.2.1.64"/>
    </reaction>
</comment>
<comment type="pathway">
    <text>Protein modification; protein neddylation.</text>
</comment>
<comment type="subunit">
    <text>Heterodimer of uba3 and nae1. The complex binds nedd8 and ube2m.</text>
</comment>
<comment type="miscellaneous">
    <text evidence="1">Arg-192 acts as a selectivity gate, preventing misactivation of ubiquitin by this nedd8-specific E1 complex.</text>
</comment>
<comment type="miscellaneous">
    <text>Nae1 and uba3 correspond to the N-terminal and the C-terminal part of yeast uba3. In yeast the two subunits form a single polypeptide chain.</text>
</comment>
<comment type="similarity">
    <text evidence="2">Belongs to the ubiquitin-activating E1 family. UBA3 subfamily.</text>
</comment>
<keyword id="KW-0067">ATP-binding</keyword>
<keyword id="KW-0903">Direct protein sequencing</keyword>
<keyword id="KW-0436">Ligase</keyword>
<keyword id="KW-0547">Nucleotide-binding</keyword>
<keyword id="KW-1185">Reference proteome</keyword>
<keyword id="KW-0833">Ubl conjugation pathway</keyword>
<reference key="1">
    <citation type="journal article" date="2005" name="Nature">
        <title>The genome of the social amoeba Dictyostelium discoideum.</title>
        <authorList>
            <person name="Eichinger L."/>
            <person name="Pachebat J.A."/>
            <person name="Gloeckner G."/>
            <person name="Rajandream M.A."/>
            <person name="Sucgang R."/>
            <person name="Berriman M."/>
            <person name="Song J."/>
            <person name="Olsen R."/>
            <person name="Szafranski K."/>
            <person name="Xu Q."/>
            <person name="Tunggal B."/>
            <person name="Kummerfeld S."/>
            <person name="Madera M."/>
            <person name="Konfortov B.A."/>
            <person name="Rivero F."/>
            <person name="Bankier A.T."/>
            <person name="Lehmann R."/>
            <person name="Hamlin N."/>
            <person name="Davies R."/>
            <person name="Gaudet P."/>
            <person name="Fey P."/>
            <person name="Pilcher K."/>
            <person name="Chen G."/>
            <person name="Saunders D."/>
            <person name="Sodergren E.J."/>
            <person name="Davis P."/>
            <person name="Kerhornou A."/>
            <person name="Nie X."/>
            <person name="Hall N."/>
            <person name="Anjard C."/>
            <person name="Hemphill L."/>
            <person name="Bason N."/>
            <person name="Farbrother P."/>
            <person name="Desany B."/>
            <person name="Just E."/>
            <person name="Morio T."/>
            <person name="Rost R."/>
            <person name="Churcher C.M."/>
            <person name="Cooper J."/>
            <person name="Haydock S."/>
            <person name="van Driessche N."/>
            <person name="Cronin A."/>
            <person name="Goodhead I."/>
            <person name="Muzny D.M."/>
            <person name="Mourier T."/>
            <person name="Pain A."/>
            <person name="Lu M."/>
            <person name="Harper D."/>
            <person name="Lindsay R."/>
            <person name="Hauser H."/>
            <person name="James K.D."/>
            <person name="Quiles M."/>
            <person name="Madan Babu M."/>
            <person name="Saito T."/>
            <person name="Buchrieser C."/>
            <person name="Wardroper A."/>
            <person name="Felder M."/>
            <person name="Thangavelu M."/>
            <person name="Johnson D."/>
            <person name="Knights A."/>
            <person name="Loulseged H."/>
            <person name="Mungall K.L."/>
            <person name="Oliver K."/>
            <person name="Price C."/>
            <person name="Quail M.A."/>
            <person name="Urushihara H."/>
            <person name="Hernandez J."/>
            <person name="Rabbinowitsch E."/>
            <person name="Steffen D."/>
            <person name="Sanders M."/>
            <person name="Ma J."/>
            <person name="Kohara Y."/>
            <person name="Sharp S."/>
            <person name="Simmonds M.N."/>
            <person name="Spiegler S."/>
            <person name="Tivey A."/>
            <person name="Sugano S."/>
            <person name="White B."/>
            <person name="Walker D."/>
            <person name="Woodward J.R."/>
            <person name="Winckler T."/>
            <person name="Tanaka Y."/>
            <person name="Shaulsky G."/>
            <person name="Schleicher M."/>
            <person name="Weinstock G.M."/>
            <person name="Rosenthal A."/>
            <person name="Cox E.C."/>
            <person name="Chisholm R.L."/>
            <person name="Gibbs R.A."/>
            <person name="Loomis W.F."/>
            <person name="Platzer M."/>
            <person name="Kay R.R."/>
            <person name="Williams J.G."/>
            <person name="Dear P.H."/>
            <person name="Noegel A.A."/>
            <person name="Barrell B.G."/>
            <person name="Kuspa A."/>
        </authorList>
    </citation>
    <scope>NUCLEOTIDE SEQUENCE [LARGE SCALE GENOMIC DNA]</scope>
    <source>
        <strain>AX4</strain>
    </source>
</reference>
<reference key="2">
    <citation type="submission" date="2010-01" db="UniProtKB">
        <authorList>
            <person name="Bienvenut W.V."/>
            <person name="Veltman D.M."/>
            <person name="Insall R.H."/>
        </authorList>
    </citation>
    <scope>PROTEIN SEQUENCE OF 103-115; 141-152 AND 275-283</scope>
    <scope>IDENTIFICATION BY MASS SPECTROMETRY</scope>
</reference>
<proteinExistence type="evidence at protein level"/>
<accession>Q54QG9</accession>
<evidence type="ECO:0000250" key="1"/>
<evidence type="ECO:0000305" key="2"/>
<feature type="chain" id="PRO_0000330897" description="NEDD8-activating enzyme E1 catalytic subunit">
    <location>
        <begin position="1"/>
        <end position="442"/>
    </location>
</feature>
<feature type="active site" description="Glycyl thioester intermediate" evidence="1">
    <location>
        <position position="218"/>
    </location>
</feature>
<feature type="binding site" evidence="1">
    <location>
        <begin position="80"/>
        <end position="104"/>
    </location>
    <ligand>
        <name>ATP</name>
        <dbReference type="ChEBI" id="CHEBI:30616"/>
    </ligand>
</feature>
<feature type="binding site" evidence="1">
    <location>
        <begin position="128"/>
        <end position="151"/>
    </location>
    <ligand>
        <name>ATP</name>
        <dbReference type="ChEBI" id="CHEBI:30616"/>
    </ligand>
</feature>
<feature type="site" description="Determines specificity for NEDD8" evidence="1">
    <location>
        <position position="192"/>
    </location>
</feature>
<gene>
    <name type="primary">uba3</name>
    <name type="synonym">ube1c</name>
    <name type="ORF">DDB_G0283891</name>
</gene>
<dbReference type="EC" id="6.2.1.64"/>
<dbReference type="EMBL" id="AAFI02000057">
    <property type="protein sequence ID" value="EAL65560.1"/>
    <property type="molecule type" value="Genomic_DNA"/>
</dbReference>
<dbReference type="RefSeq" id="XP_638902.1">
    <property type="nucleotide sequence ID" value="XM_633810.1"/>
</dbReference>
<dbReference type="SMR" id="Q54QG9"/>
<dbReference type="FunCoup" id="Q54QG9">
    <property type="interactions" value="1312"/>
</dbReference>
<dbReference type="STRING" id="44689.Q54QG9"/>
<dbReference type="PaxDb" id="44689-DDB0238040"/>
<dbReference type="EnsemblProtists" id="EAL65560">
    <property type="protein sequence ID" value="EAL65560"/>
    <property type="gene ID" value="DDB_G0283891"/>
</dbReference>
<dbReference type="GeneID" id="8624299"/>
<dbReference type="KEGG" id="ddi:DDB_G0283891"/>
<dbReference type="dictyBase" id="DDB_G0283891">
    <property type="gene designation" value="ube1c"/>
</dbReference>
<dbReference type="VEuPathDB" id="AmoebaDB:DDB_G0283891"/>
<dbReference type="eggNOG" id="KOG2015">
    <property type="taxonomic scope" value="Eukaryota"/>
</dbReference>
<dbReference type="HOGENOM" id="CLU_013325_13_1_1"/>
<dbReference type="InParanoid" id="Q54QG9"/>
<dbReference type="OMA" id="PYLENYM"/>
<dbReference type="PhylomeDB" id="Q54QG9"/>
<dbReference type="Reactome" id="R-DDI-8951664">
    <property type="pathway name" value="Neddylation"/>
</dbReference>
<dbReference type="Reactome" id="R-DDI-983168">
    <property type="pathway name" value="Antigen processing: Ubiquitination &amp; Proteasome degradation"/>
</dbReference>
<dbReference type="UniPathway" id="UPA00885"/>
<dbReference type="PRO" id="PR:Q54QG9"/>
<dbReference type="Proteomes" id="UP000002195">
    <property type="component" value="Chromosome 4"/>
</dbReference>
<dbReference type="GO" id="GO:0005737">
    <property type="term" value="C:cytoplasm"/>
    <property type="evidence" value="ECO:0000318"/>
    <property type="project" value="GO_Central"/>
</dbReference>
<dbReference type="GO" id="GO:0005634">
    <property type="term" value="C:nucleus"/>
    <property type="evidence" value="ECO:0000318"/>
    <property type="project" value="GO_Central"/>
</dbReference>
<dbReference type="GO" id="GO:0005524">
    <property type="term" value="F:ATP binding"/>
    <property type="evidence" value="ECO:0007669"/>
    <property type="project" value="UniProtKB-KW"/>
</dbReference>
<dbReference type="GO" id="GO:0019781">
    <property type="term" value="F:NEDD8 activating enzyme activity"/>
    <property type="evidence" value="ECO:0000250"/>
    <property type="project" value="dictyBase"/>
</dbReference>
<dbReference type="GO" id="GO:0045116">
    <property type="term" value="P:protein neddylation"/>
    <property type="evidence" value="ECO:0000250"/>
    <property type="project" value="dictyBase"/>
</dbReference>
<dbReference type="CDD" id="cd01488">
    <property type="entry name" value="Uba3_RUB"/>
    <property type="match status" value="1"/>
</dbReference>
<dbReference type="FunFam" id="1.10.10.520:FF:000001">
    <property type="entry name" value="NEDD8-activating enzyme E1 catalytic subunit"/>
    <property type="match status" value="1"/>
</dbReference>
<dbReference type="FunFam" id="3.50.50.80:FF:000002">
    <property type="entry name" value="SUMO-activating enzyme subunit 2"/>
    <property type="match status" value="1"/>
</dbReference>
<dbReference type="FunFam" id="3.10.290.20:FF:000003">
    <property type="entry name" value="Ubiquitin-activating enzyme E1 C"/>
    <property type="match status" value="1"/>
</dbReference>
<dbReference type="Gene3D" id="3.40.50.720">
    <property type="entry name" value="NAD(P)-binding Rossmann-like Domain"/>
    <property type="match status" value="1"/>
</dbReference>
<dbReference type="Gene3D" id="1.10.10.520">
    <property type="entry name" value="Ubiquitin activating enzymes (Uba3). Chain: B, domain 2"/>
    <property type="match status" value="1"/>
</dbReference>
<dbReference type="Gene3D" id="3.10.290.20">
    <property type="entry name" value="Ubiquitin-like 2 activating enzyme e1b. Chain: B, domain 3"/>
    <property type="match status" value="1"/>
</dbReference>
<dbReference type="InterPro" id="IPR014929">
    <property type="entry name" value="E2-binding"/>
</dbReference>
<dbReference type="InterPro" id="IPR045886">
    <property type="entry name" value="ThiF/MoeB/HesA"/>
</dbReference>
<dbReference type="InterPro" id="IPR000594">
    <property type="entry name" value="ThiF_NAD_FAD-bd"/>
</dbReference>
<dbReference type="InterPro" id="IPR023318">
    <property type="entry name" value="Ub_act_enz_dom_a_sf"/>
</dbReference>
<dbReference type="InterPro" id="IPR030468">
    <property type="entry name" value="Uba3_N"/>
</dbReference>
<dbReference type="InterPro" id="IPR035985">
    <property type="entry name" value="Ubiquitin-activating_enz"/>
</dbReference>
<dbReference type="PANTHER" id="PTHR10953:SF6">
    <property type="entry name" value="NEDD8-ACTIVATING ENZYME E1 CATALYTIC SUBUNIT"/>
    <property type="match status" value="1"/>
</dbReference>
<dbReference type="PANTHER" id="PTHR10953">
    <property type="entry name" value="UBIQUITIN-ACTIVATING ENZYME E1"/>
    <property type="match status" value="1"/>
</dbReference>
<dbReference type="Pfam" id="PF08825">
    <property type="entry name" value="E2_bind"/>
    <property type="match status" value="1"/>
</dbReference>
<dbReference type="Pfam" id="PF00899">
    <property type="entry name" value="ThiF"/>
    <property type="match status" value="1"/>
</dbReference>
<dbReference type="SMART" id="SM01181">
    <property type="entry name" value="E2_bind"/>
    <property type="match status" value="1"/>
</dbReference>
<dbReference type="SUPFAM" id="SSF69572">
    <property type="entry name" value="Activating enzymes of the ubiquitin-like proteins"/>
    <property type="match status" value="1"/>
</dbReference>
<sequence>METMDTSVDLPGRWIDIEKIIKRTGPFASPSFEPDTKASPNIMNGLQNDFKVLVIGAGGLGCEILKNLALSGFRNIDVIDMDTIDISNLNRQFLFRRKDVGKSKAEVAAAFINSRITGCNVTPHKCRIQDKDEDYYRQFKIVIAGLDSIEARRWINGLLVNLVVVNDSGDIEPDTIIPLVDGGTEGFKGQARVILPKISSCFECSLDAFPPQVSYAICTIANTPRVPEHCIQWALLFGLQDATLEKPFDPKQFDNDNPDHMNWLFECAKKRAEKFNINGVTYKLTQGVAKNIIPAIASTNAIIAAACCNEVFKFCTDSSGYLNNYMMYNGLNGVYTFTFEYEIKEGCAVCGTNLVTFEIDKSNTLSTFLEKITTDSRFQFKKPSLRSNGRNLYMQGLLHQSTVPNLEKTLSELNVQEDDEITITDPALPGNLAVRMRIKYTS</sequence>
<protein>
    <recommendedName>
        <fullName>NEDD8-activating enzyme E1 catalytic subunit</fullName>
        <ecNumber>6.2.1.64</ecNumber>
    </recommendedName>
    <alternativeName>
        <fullName>NEDD8-activating enzyme E1C</fullName>
    </alternativeName>
    <alternativeName>
        <fullName>Ubiquitin-activating enzyme E1C</fullName>
    </alternativeName>
    <alternativeName>
        <fullName>Ubiquitin-like modifier-activating enzyme 3</fullName>
        <shortName>Ubiquitin-activating enzyme 3</shortName>
    </alternativeName>
</protein>
<name>UBA3_DICDI</name>